<name>M4A6B_MOUSE</name>
<gene>
    <name type="primary">Ms4a6b</name>
</gene>
<comment type="function">
    <text>May be involved in signal transduction as a component of a multimeric receptor complex.</text>
</comment>
<comment type="subcellular location">
    <subcellularLocation>
        <location>Membrane</location>
        <topology>Multi-pass membrane protein</topology>
    </subcellularLocation>
</comment>
<comment type="tissue specificity">
    <text>Expressed at high levels in thymus, spleen, and peripheral lymph nodes, with less abundant levels in non-lymphoid tissues.</text>
</comment>
<comment type="similarity">
    <text evidence="2">Belongs to the MS4A family.</text>
</comment>
<proteinExistence type="evidence at transcript level"/>
<feature type="chain" id="PRO_0000158639" description="Membrane-spanning 4-domains subfamily A member 6B">
    <location>
        <begin position="1"/>
        <end position="244"/>
    </location>
</feature>
<feature type="topological domain" description="Cytoplasmic" evidence="1">
    <location>
        <begin position="1"/>
        <end position="46"/>
    </location>
</feature>
<feature type="transmembrane region" description="Helical" evidence="1">
    <location>
        <begin position="47"/>
        <end position="67"/>
    </location>
</feature>
<feature type="topological domain" description="Extracellular" evidence="1">
    <location>
        <begin position="68"/>
        <end position="84"/>
    </location>
</feature>
<feature type="transmembrane region" description="Helical" evidence="1">
    <location>
        <begin position="85"/>
        <end position="105"/>
    </location>
</feature>
<feature type="topological domain" description="Cytoplasmic" evidence="1">
    <location>
        <begin position="106"/>
        <end position="121"/>
    </location>
</feature>
<feature type="transmembrane region" description="Helical" evidence="1">
    <location>
        <begin position="122"/>
        <end position="142"/>
    </location>
</feature>
<feature type="topological domain" description="Extracellular" evidence="1">
    <location>
        <begin position="143"/>
        <end position="176"/>
    </location>
</feature>
<feature type="transmembrane region" description="Helical" evidence="1">
    <location>
        <begin position="177"/>
        <end position="197"/>
    </location>
</feature>
<feature type="topological domain" description="Cytoplasmic" evidence="1">
    <location>
        <begin position="198"/>
        <end position="244"/>
    </location>
</feature>
<feature type="sequence conflict" description="In Ref. 2; BAB25136." evidence="2" ref="2">
    <original>I</original>
    <variation>L</variation>
    <location>
        <position position="65"/>
    </location>
</feature>
<feature type="sequence conflict" description="In Ref. 2; BAC35886." evidence="2" ref="2">
    <original>A</original>
    <variation>S</variation>
    <location>
        <position position="140"/>
    </location>
</feature>
<evidence type="ECO:0000255" key="1"/>
<evidence type="ECO:0000305" key="2"/>
<keyword id="KW-0472">Membrane</keyword>
<keyword id="KW-0675">Receptor</keyword>
<keyword id="KW-1185">Reference proteome</keyword>
<keyword id="KW-0812">Transmembrane</keyword>
<keyword id="KW-1133">Transmembrane helix</keyword>
<dbReference type="EMBL" id="AF237909">
    <property type="protein sequence ID" value="AAK37418.1"/>
    <property type="molecule type" value="mRNA"/>
</dbReference>
<dbReference type="EMBL" id="AK007613">
    <property type="protein sequence ID" value="BAB25136.1"/>
    <property type="molecule type" value="mRNA"/>
</dbReference>
<dbReference type="EMBL" id="AK075671">
    <property type="protein sequence ID" value="BAC35886.1"/>
    <property type="molecule type" value="mRNA"/>
</dbReference>
<dbReference type="EMBL" id="BC027425">
    <property type="protein sequence ID" value="AAH27425.1"/>
    <property type="molecule type" value="mRNA"/>
</dbReference>
<dbReference type="CCDS" id="CCDS29601.1"/>
<dbReference type="RefSeq" id="NP_081485.2">
    <property type="nucleotide sequence ID" value="NM_027209.3"/>
</dbReference>
<dbReference type="SMR" id="Q99N09"/>
<dbReference type="FunCoup" id="Q99N09">
    <property type="interactions" value="144"/>
</dbReference>
<dbReference type="STRING" id="10090.ENSMUSP00000124685"/>
<dbReference type="PaxDb" id="10090-ENSMUSP00000124685"/>
<dbReference type="ProteomicsDB" id="287283"/>
<dbReference type="DNASU" id="69774"/>
<dbReference type="Ensembl" id="ENSMUST00000025580.10">
    <property type="protein sequence ID" value="ENSMUSP00000025580.4"/>
    <property type="gene ID" value="ENSMUSG00000024677.14"/>
</dbReference>
<dbReference type="Ensembl" id="ENSMUST00000163078.8">
    <property type="protein sequence ID" value="ENSMUSP00000124685.2"/>
    <property type="gene ID" value="ENSMUSG00000024677.14"/>
</dbReference>
<dbReference type="GeneID" id="69774"/>
<dbReference type="KEGG" id="mmu:69774"/>
<dbReference type="UCSC" id="uc008gsk.1">
    <property type="organism name" value="mouse"/>
</dbReference>
<dbReference type="AGR" id="MGI:1917024"/>
<dbReference type="CTD" id="69774"/>
<dbReference type="MGI" id="MGI:1917024">
    <property type="gene designation" value="Ms4a6b"/>
</dbReference>
<dbReference type="VEuPathDB" id="HostDB:ENSMUSG00000024677"/>
<dbReference type="eggNOG" id="ENOG502SUQB">
    <property type="taxonomic scope" value="Eukaryota"/>
</dbReference>
<dbReference type="GeneTree" id="ENSGT00940000162688"/>
<dbReference type="HOGENOM" id="CLU_089673_1_0_1"/>
<dbReference type="InParanoid" id="Q99N09"/>
<dbReference type="OMA" id="HGHHINS"/>
<dbReference type="OrthoDB" id="10071849at2759"/>
<dbReference type="PhylomeDB" id="Q99N09"/>
<dbReference type="TreeFam" id="TF335157"/>
<dbReference type="BioGRID-ORCS" id="69774">
    <property type="hits" value="2 hits in 77 CRISPR screens"/>
</dbReference>
<dbReference type="ChiTaRS" id="Ms4a6b">
    <property type="organism name" value="mouse"/>
</dbReference>
<dbReference type="PRO" id="PR:Q99N09"/>
<dbReference type="Proteomes" id="UP000000589">
    <property type="component" value="Chromosome 19"/>
</dbReference>
<dbReference type="RNAct" id="Q99N09">
    <property type="molecule type" value="protein"/>
</dbReference>
<dbReference type="Bgee" id="ENSMUSG00000024677">
    <property type="expression patterns" value="Expressed in stroma of bone marrow and 170 other cell types or tissues"/>
</dbReference>
<dbReference type="ExpressionAtlas" id="Q99N09">
    <property type="expression patterns" value="baseline and differential"/>
</dbReference>
<dbReference type="GO" id="GO:0016020">
    <property type="term" value="C:membrane"/>
    <property type="evidence" value="ECO:0007669"/>
    <property type="project" value="UniProtKB-SubCell"/>
</dbReference>
<dbReference type="InterPro" id="IPR007237">
    <property type="entry name" value="CD20-like"/>
</dbReference>
<dbReference type="InterPro" id="IPR030417">
    <property type="entry name" value="MS4A"/>
</dbReference>
<dbReference type="PANTHER" id="PTHR23320:SF150">
    <property type="entry name" value="MEMBRANE-SPANNING 4-DOMAINS SUBFAMILY A MEMBER 6B-RELATED"/>
    <property type="match status" value="1"/>
</dbReference>
<dbReference type="PANTHER" id="PTHR23320">
    <property type="entry name" value="MEMBRANE-SPANNING 4-DOMAINS SUBFAMILY A MS4A -RELATED"/>
    <property type="match status" value="1"/>
</dbReference>
<dbReference type="Pfam" id="PF04103">
    <property type="entry name" value="CD20"/>
    <property type="match status" value="1"/>
</dbReference>
<reference key="1">
    <citation type="journal article" date="2001" name="Genomics">
        <title>Identification of a CD20-, Fc-epsilon-RI-beta-, and HTm4-related gene family: sixteen new MS4A family members expressed in human and mouse.</title>
        <authorList>
            <person name="Liang Y."/>
            <person name="Tedder T.F."/>
        </authorList>
    </citation>
    <scope>NUCLEOTIDE SEQUENCE [MRNA]</scope>
    <source>
        <tissue>Fetus</tissue>
    </source>
</reference>
<reference key="2">
    <citation type="journal article" date="2005" name="Science">
        <title>The transcriptional landscape of the mammalian genome.</title>
        <authorList>
            <person name="Carninci P."/>
            <person name="Kasukawa T."/>
            <person name="Katayama S."/>
            <person name="Gough J."/>
            <person name="Frith M.C."/>
            <person name="Maeda N."/>
            <person name="Oyama R."/>
            <person name="Ravasi T."/>
            <person name="Lenhard B."/>
            <person name="Wells C."/>
            <person name="Kodzius R."/>
            <person name="Shimokawa K."/>
            <person name="Bajic V.B."/>
            <person name="Brenner S.E."/>
            <person name="Batalov S."/>
            <person name="Forrest A.R."/>
            <person name="Zavolan M."/>
            <person name="Davis M.J."/>
            <person name="Wilming L.G."/>
            <person name="Aidinis V."/>
            <person name="Allen J.E."/>
            <person name="Ambesi-Impiombato A."/>
            <person name="Apweiler R."/>
            <person name="Aturaliya R.N."/>
            <person name="Bailey T.L."/>
            <person name="Bansal M."/>
            <person name="Baxter L."/>
            <person name="Beisel K.W."/>
            <person name="Bersano T."/>
            <person name="Bono H."/>
            <person name="Chalk A.M."/>
            <person name="Chiu K.P."/>
            <person name="Choudhary V."/>
            <person name="Christoffels A."/>
            <person name="Clutterbuck D.R."/>
            <person name="Crowe M.L."/>
            <person name="Dalla E."/>
            <person name="Dalrymple B.P."/>
            <person name="de Bono B."/>
            <person name="Della Gatta G."/>
            <person name="di Bernardo D."/>
            <person name="Down T."/>
            <person name="Engstrom P."/>
            <person name="Fagiolini M."/>
            <person name="Faulkner G."/>
            <person name="Fletcher C.F."/>
            <person name="Fukushima T."/>
            <person name="Furuno M."/>
            <person name="Futaki S."/>
            <person name="Gariboldi M."/>
            <person name="Georgii-Hemming P."/>
            <person name="Gingeras T.R."/>
            <person name="Gojobori T."/>
            <person name="Green R.E."/>
            <person name="Gustincich S."/>
            <person name="Harbers M."/>
            <person name="Hayashi Y."/>
            <person name="Hensch T.K."/>
            <person name="Hirokawa N."/>
            <person name="Hill D."/>
            <person name="Huminiecki L."/>
            <person name="Iacono M."/>
            <person name="Ikeo K."/>
            <person name="Iwama A."/>
            <person name="Ishikawa T."/>
            <person name="Jakt M."/>
            <person name="Kanapin A."/>
            <person name="Katoh M."/>
            <person name="Kawasawa Y."/>
            <person name="Kelso J."/>
            <person name="Kitamura H."/>
            <person name="Kitano H."/>
            <person name="Kollias G."/>
            <person name="Krishnan S.P."/>
            <person name="Kruger A."/>
            <person name="Kummerfeld S.K."/>
            <person name="Kurochkin I.V."/>
            <person name="Lareau L.F."/>
            <person name="Lazarevic D."/>
            <person name="Lipovich L."/>
            <person name="Liu J."/>
            <person name="Liuni S."/>
            <person name="McWilliam S."/>
            <person name="Madan Babu M."/>
            <person name="Madera M."/>
            <person name="Marchionni L."/>
            <person name="Matsuda H."/>
            <person name="Matsuzawa S."/>
            <person name="Miki H."/>
            <person name="Mignone F."/>
            <person name="Miyake S."/>
            <person name="Morris K."/>
            <person name="Mottagui-Tabar S."/>
            <person name="Mulder N."/>
            <person name="Nakano N."/>
            <person name="Nakauchi H."/>
            <person name="Ng P."/>
            <person name="Nilsson R."/>
            <person name="Nishiguchi S."/>
            <person name="Nishikawa S."/>
            <person name="Nori F."/>
            <person name="Ohara O."/>
            <person name="Okazaki Y."/>
            <person name="Orlando V."/>
            <person name="Pang K.C."/>
            <person name="Pavan W.J."/>
            <person name="Pavesi G."/>
            <person name="Pesole G."/>
            <person name="Petrovsky N."/>
            <person name="Piazza S."/>
            <person name="Reed J."/>
            <person name="Reid J.F."/>
            <person name="Ring B.Z."/>
            <person name="Ringwald M."/>
            <person name="Rost B."/>
            <person name="Ruan Y."/>
            <person name="Salzberg S.L."/>
            <person name="Sandelin A."/>
            <person name="Schneider C."/>
            <person name="Schoenbach C."/>
            <person name="Sekiguchi K."/>
            <person name="Semple C.A."/>
            <person name="Seno S."/>
            <person name="Sessa L."/>
            <person name="Sheng Y."/>
            <person name="Shibata Y."/>
            <person name="Shimada H."/>
            <person name="Shimada K."/>
            <person name="Silva D."/>
            <person name="Sinclair B."/>
            <person name="Sperling S."/>
            <person name="Stupka E."/>
            <person name="Sugiura K."/>
            <person name="Sultana R."/>
            <person name="Takenaka Y."/>
            <person name="Taki K."/>
            <person name="Tammoja K."/>
            <person name="Tan S.L."/>
            <person name="Tang S."/>
            <person name="Taylor M.S."/>
            <person name="Tegner J."/>
            <person name="Teichmann S.A."/>
            <person name="Ueda H.R."/>
            <person name="van Nimwegen E."/>
            <person name="Verardo R."/>
            <person name="Wei C.L."/>
            <person name="Yagi K."/>
            <person name="Yamanishi H."/>
            <person name="Zabarovsky E."/>
            <person name="Zhu S."/>
            <person name="Zimmer A."/>
            <person name="Hide W."/>
            <person name="Bult C."/>
            <person name="Grimmond S.M."/>
            <person name="Teasdale R.D."/>
            <person name="Liu E.T."/>
            <person name="Brusic V."/>
            <person name="Quackenbush J."/>
            <person name="Wahlestedt C."/>
            <person name="Mattick J.S."/>
            <person name="Hume D.A."/>
            <person name="Kai C."/>
            <person name="Sasaki D."/>
            <person name="Tomaru Y."/>
            <person name="Fukuda S."/>
            <person name="Kanamori-Katayama M."/>
            <person name="Suzuki M."/>
            <person name="Aoki J."/>
            <person name="Arakawa T."/>
            <person name="Iida J."/>
            <person name="Imamura K."/>
            <person name="Itoh M."/>
            <person name="Kato T."/>
            <person name="Kawaji H."/>
            <person name="Kawagashira N."/>
            <person name="Kawashima T."/>
            <person name="Kojima M."/>
            <person name="Kondo S."/>
            <person name="Konno H."/>
            <person name="Nakano K."/>
            <person name="Ninomiya N."/>
            <person name="Nishio T."/>
            <person name="Okada M."/>
            <person name="Plessy C."/>
            <person name="Shibata K."/>
            <person name="Shiraki T."/>
            <person name="Suzuki S."/>
            <person name="Tagami M."/>
            <person name="Waki K."/>
            <person name="Watahiki A."/>
            <person name="Okamura-Oho Y."/>
            <person name="Suzuki H."/>
            <person name="Kawai J."/>
            <person name="Hayashizaki Y."/>
        </authorList>
    </citation>
    <scope>NUCLEOTIDE SEQUENCE [LARGE SCALE MRNA]</scope>
    <source>
        <strain>C57BL/6J</strain>
        <tissue>Embryo</tissue>
        <tissue>Pancreas</tissue>
    </source>
</reference>
<reference key="3">
    <citation type="journal article" date="2004" name="Genome Res.">
        <title>The status, quality, and expansion of the NIH full-length cDNA project: the Mammalian Gene Collection (MGC).</title>
        <authorList>
            <consortium name="The MGC Project Team"/>
        </authorList>
    </citation>
    <scope>NUCLEOTIDE SEQUENCE [LARGE SCALE MRNA]</scope>
</reference>
<protein>
    <recommendedName>
        <fullName>Membrane-spanning 4-domains subfamily A member 6B</fullName>
    </recommendedName>
</protein>
<organism>
    <name type="scientific">Mus musculus</name>
    <name type="common">Mouse</name>
    <dbReference type="NCBI Taxonomy" id="10090"/>
    <lineage>
        <taxon>Eukaryota</taxon>
        <taxon>Metazoa</taxon>
        <taxon>Chordata</taxon>
        <taxon>Craniata</taxon>
        <taxon>Vertebrata</taxon>
        <taxon>Euteleostomi</taxon>
        <taxon>Mammalia</taxon>
        <taxon>Eutheria</taxon>
        <taxon>Euarchontoglires</taxon>
        <taxon>Glires</taxon>
        <taxon>Rodentia</taxon>
        <taxon>Myomorpha</taxon>
        <taxon>Muroidea</taxon>
        <taxon>Muridae</taxon>
        <taxon>Murinae</taxon>
        <taxon>Mus</taxon>
        <taxon>Mus</taxon>
    </lineage>
</organism>
<sequence length="244" mass="26860">MIPQVVTSETVAMISPNGMSLPQTDKPQPFHQWQDSLKKHLKAEIKVMAAIQIMCAVMVLSLGIILASVPSNLHFTSVFSVLLKSGYPFIGALFFIVSGILSIVTETKSTKILVDSSLTLNILSVSFAFMGIIIISVSLAGLHPASEQCLQSKELRPTEYHYYQFLDRNECFAAKSVLAGVFSLMLISTMLELGLAVLTAMLWWKQSHSNIPGNVMFLPHSSNNDSNMESKVLCNPSYEEQLVC</sequence>
<accession>Q99N09</accession>
<accession>Q8BK83</accession>
<accession>Q9D8W9</accession>